<comment type="function">
    <text evidence="1">Covalent carrier of the coenzyme of citrate lyase.</text>
</comment>
<comment type="subunit">
    <text evidence="1">Oligomer with a subunit composition of (alpha,beta,gamma)6.</text>
</comment>
<comment type="subcellular location">
    <subcellularLocation>
        <location evidence="1">Cytoplasm</location>
    </subcellularLocation>
</comment>
<comment type="similarity">
    <text evidence="1">Belongs to the CitD family.</text>
</comment>
<reference key="1">
    <citation type="journal article" date="2008" name="PLoS ONE">
        <title>A recalibrated molecular clock and independent origins for the cholera pandemic clones.</title>
        <authorList>
            <person name="Feng L."/>
            <person name="Reeves P.R."/>
            <person name="Lan R."/>
            <person name="Ren Y."/>
            <person name="Gao C."/>
            <person name="Zhou Z."/>
            <person name="Ren Y."/>
            <person name="Cheng J."/>
            <person name="Wang W."/>
            <person name="Wang J."/>
            <person name="Qian W."/>
            <person name="Li D."/>
            <person name="Wang L."/>
        </authorList>
    </citation>
    <scope>NUCLEOTIDE SEQUENCE [LARGE SCALE GENOMIC DNA]</scope>
    <source>
        <strain>M66-2</strain>
    </source>
</reference>
<sequence>MKIAHPAFAGTLESSDLQVRIEPNNDGGIELVLDSTVEQQFGHAIRQVVLHTLDAMQVRDALVTIEDKGALDCVIRARVQAAVMRACDVQNIEWSQLS</sequence>
<name>CITD_VIBCM</name>
<accession>C3LT50</accession>
<organism>
    <name type="scientific">Vibrio cholerae serotype O1 (strain M66-2)</name>
    <dbReference type="NCBI Taxonomy" id="579112"/>
    <lineage>
        <taxon>Bacteria</taxon>
        <taxon>Pseudomonadati</taxon>
        <taxon>Pseudomonadota</taxon>
        <taxon>Gammaproteobacteria</taxon>
        <taxon>Vibrionales</taxon>
        <taxon>Vibrionaceae</taxon>
        <taxon>Vibrio</taxon>
    </lineage>
</organism>
<evidence type="ECO:0000255" key="1">
    <source>
        <dbReference type="HAMAP-Rule" id="MF_00805"/>
    </source>
</evidence>
<proteinExistence type="inferred from homology"/>
<dbReference type="EMBL" id="CP001233">
    <property type="protein sequence ID" value="ACP05076.1"/>
    <property type="molecule type" value="Genomic_DNA"/>
</dbReference>
<dbReference type="RefSeq" id="WP_000684015.1">
    <property type="nucleotide sequence ID" value="NC_012578.1"/>
</dbReference>
<dbReference type="SMR" id="C3LT50"/>
<dbReference type="GeneID" id="69720455"/>
<dbReference type="KEGG" id="vcm:VCM66_0755"/>
<dbReference type="HOGENOM" id="CLU_158489_0_0_6"/>
<dbReference type="Proteomes" id="UP000001217">
    <property type="component" value="Chromosome I"/>
</dbReference>
<dbReference type="GO" id="GO:0005737">
    <property type="term" value="C:cytoplasm"/>
    <property type="evidence" value="ECO:0007669"/>
    <property type="project" value="UniProtKB-SubCell"/>
</dbReference>
<dbReference type="HAMAP" id="MF_00805">
    <property type="entry name" value="CitD"/>
    <property type="match status" value="1"/>
</dbReference>
<dbReference type="InterPro" id="IPR006495">
    <property type="entry name" value="CitD"/>
</dbReference>
<dbReference type="InterPro" id="IPR023439">
    <property type="entry name" value="Mal_deCO2ase/Cit_lyase_ACP"/>
</dbReference>
<dbReference type="NCBIfam" id="TIGR01608">
    <property type="entry name" value="citD"/>
    <property type="match status" value="1"/>
</dbReference>
<dbReference type="NCBIfam" id="NF009726">
    <property type="entry name" value="PRK13253.1"/>
    <property type="match status" value="1"/>
</dbReference>
<dbReference type="Pfam" id="PF06857">
    <property type="entry name" value="ACP"/>
    <property type="match status" value="1"/>
</dbReference>
<dbReference type="PIRSF" id="PIRSF002736">
    <property type="entry name" value="Citrt_lyas_gamma"/>
    <property type="match status" value="1"/>
</dbReference>
<keyword id="KW-0963">Cytoplasm</keyword>
<keyword id="KW-0597">Phosphoprotein</keyword>
<feature type="chain" id="PRO_1000148566" description="Citrate lyase acyl carrier protein">
    <location>
        <begin position="1"/>
        <end position="98"/>
    </location>
</feature>
<feature type="modified residue" description="O-(phosphoribosyl dephospho-coenzyme A)serine" evidence="1">
    <location>
        <position position="14"/>
    </location>
</feature>
<protein>
    <recommendedName>
        <fullName evidence="1">Citrate lyase acyl carrier protein</fullName>
    </recommendedName>
    <alternativeName>
        <fullName evidence="1">Citrate lyase gamma chain</fullName>
    </alternativeName>
</protein>
<gene>
    <name evidence="1" type="primary">citD</name>
    <name type="ordered locus">VCM66_0755</name>
</gene>